<evidence type="ECO:0000255" key="1">
    <source>
        <dbReference type="HAMAP-Rule" id="MF_00377"/>
    </source>
</evidence>
<evidence type="ECO:0000305" key="2"/>
<proteinExistence type="inferred from homology"/>
<organism>
    <name type="scientific">Francisella tularensis subsp. tularensis (strain SCHU S4 / Schu 4)</name>
    <dbReference type="NCBI Taxonomy" id="177416"/>
    <lineage>
        <taxon>Bacteria</taxon>
        <taxon>Pseudomonadati</taxon>
        <taxon>Pseudomonadota</taxon>
        <taxon>Gammaproteobacteria</taxon>
        <taxon>Thiotrichales</taxon>
        <taxon>Francisellaceae</taxon>
        <taxon>Francisella</taxon>
    </lineage>
</organism>
<feature type="chain" id="PRO_0000114180" description="Chromosomal replication initiator protein DnaA">
    <location>
        <begin position="1"/>
        <end position="491"/>
    </location>
</feature>
<feature type="region of interest" description="Domain I, interacts with DnaA modulators" evidence="1">
    <location>
        <begin position="1"/>
        <end position="69"/>
    </location>
</feature>
<feature type="region of interest" description="Domain II" evidence="1">
    <location>
        <begin position="69"/>
        <end position="154"/>
    </location>
</feature>
<feature type="region of interest" description="Domain III, AAA+ region" evidence="1">
    <location>
        <begin position="155"/>
        <end position="371"/>
    </location>
</feature>
<feature type="region of interest" description="Domain IV, binds dsDNA" evidence="1">
    <location>
        <begin position="372"/>
        <end position="491"/>
    </location>
</feature>
<feature type="binding site" evidence="1">
    <location>
        <position position="199"/>
    </location>
    <ligand>
        <name>ATP</name>
        <dbReference type="ChEBI" id="CHEBI:30616"/>
    </ligand>
</feature>
<feature type="binding site" evidence="1">
    <location>
        <position position="201"/>
    </location>
    <ligand>
        <name>ATP</name>
        <dbReference type="ChEBI" id="CHEBI:30616"/>
    </ligand>
</feature>
<feature type="binding site" evidence="1">
    <location>
        <position position="202"/>
    </location>
    <ligand>
        <name>ATP</name>
        <dbReference type="ChEBI" id="CHEBI:30616"/>
    </ligand>
</feature>
<feature type="binding site" evidence="1">
    <location>
        <position position="203"/>
    </location>
    <ligand>
        <name>ATP</name>
        <dbReference type="ChEBI" id="CHEBI:30616"/>
    </ligand>
</feature>
<protein>
    <recommendedName>
        <fullName evidence="1">Chromosomal replication initiator protein DnaA</fullName>
    </recommendedName>
</protein>
<comment type="function">
    <text evidence="1">Plays an essential role in the initiation and regulation of chromosomal replication. ATP-DnaA binds to the origin of replication (oriC) to initiate formation of the DNA replication initiation complex once per cell cycle. Binds the DnaA box (a 9 base pair repeat at the origin) and separates the double-stranded (ds)DNA. Forms a right-handed helical filament on oriC DNA; dsDNA binds to the exterior of the filament while single-stranded (ss)DNA is stabiized in the filament's interior. The ATP-DnaA-oriC complex binds and stabilizes one strand of the AT-rich DNA unwinding element (DUE), permitting loading of DNA polymerase. After initiation quickly degrades to an ADP-DnaA complex that is not apt for DNA replication. Binds acidic phospholipids.</text>
</comment>
<comment type="subunit">
    <text evidence="1">Oligomerizes as a right-handed, spiral filament on DNA at oriC.</text>
</comment>
<comment type="subcellular location">
    <subcellularLocation>
        <location evidence="1">Cytoplasm</location>
    </subcellularLocation>
</comment>
<comment type="domain">
    <text evidence="1">Domain I is involved in oligomerization and binding regulators, domain II is flexibile and of varying length in different bacteria, domain III forms the AAA+ region, while domain IV binds dsDNA.</text>
</comment>
<comment type="similarity">
    <text evidence="1">Belongs to the DnaA family.</text>
</comment>
<comment type="sequence caution" evidence="2">
    <conflict type="erroneous initiation">
        <sequence resource="EMBL-CDS" id="CAG44634"/>
    </conflict>
</comment>
<dbReference type="EMBL" id="AJ749949">
    <property type="protein sequence ID" value="CAG44634.1"/>
    <property type="status" value="ALT_INIT"/>
    <property type="molecule type" value="Genomic_DNA"/>
</dbReference>
<dbReference type="RefSeq" id="WP_011997492.1">
    <property type="nucleotide sequence ID" value="NZ_CP010290.1"/>
</dbReference>
<dbReference type="RefSeq" id="YP_169084.1">
    <property type="nucleotide sequence ID" value="NC_006570.2"/>
</dbReference>
<dbReference type="SMR" id="Q5NIQ8"/>
<dbReference type="STRING" id="177416.FTT_0001"/>
<dbReference type="DNASU" id="3191523"/>
<dbReference type="EnsemblBacteria" id="CAG44634">
    <property type="protein sequence ID" value="CAG44634"/>
    <property type="gene ID" value="FTT_0001"/>
</dbReference>
<dbReference type="GeneID" id="75264486"/>
<dbReference type="KEGG" id="ftu:FTT_0001"/>
<dbReference type="PATRIC" id="fig|177416.18.peg.1"/>
<dbReference type="eggNOG" id="COG0593">
    <property type="taxonomic scope" value="Bacteria"/>
</dbReference>
<dbReference type="OrthoDB" id="9807019at2"/>
<dbReference type="Proteomes" id="UP000001174">
    <property type="component" value="Chromosome"/>
</dbReference>
<dbReference type="GO" id="GO:0005737">
    <property type="term" value="C:cytoplasm"/>
    <property type="evidence" value="ECO:0007669"/>
    <property type="project" value="UniProtKB-SubCell"/>
</dbReference>
<dbReference type="GO" id="GO:0005886">
    <property type="term" value="C:plasma membrane"/>
    <property type="evidence" value="ECO:0007669"/>
    <property type="project" value="TreeGrafter"/>
</dbReference>
<dbReference type="GO" id="GO:0005524">
    <property type="term" value="F:ATP binding"/>
    <property type="evidence" value="ECO:0007669"/>
    <property type="project" value="UniProtKB-UniRule"/>
</dbReference>
<dbReference type="GO" id="GO:0016887">
    <property type="term" value="F:ATP hydrolysis activity"/>
    <property type="evidence" value="ECO:0007669"/>
    <property type="project" value="InterPro"/>
</dbReference>
<dbReference type="GO" id="GO:0003688">
    <property type="term" value="F:DNA replication origin binding"/>
    <property type="evidence" value="ECO:0007669"/>
    <property type="project" value="UniProtKB-UniRule"/>
</dbReference>
<dbReference type="GO" id="GO:0008289">
    <property type="term" value="F:lipid binding"/>
    <property type="evidence" value="ECO:0007669"/>
    <property type="project" value="UniProtKB-KW"/>
</dbReference>
<dbReference type="GO" id="GO:0006270">
    <property type="term" value="P:DNA replication initiation"/>
    <property type="evidence" value="ECO:0007669"/>
    <property type="project" value="UniProtKB-UniRule"/>
</dbReference>
<dbReference type="GO" id="GO:0006275">
    <property type="term" value="P:regulation of DNA replication"/>
    <property type="evidence" value="ECO:0007669"/>
    <property type="project" value="UniProtKB-UniRule"/>
</dbReference>
<dbReference type="CDD" id="cd00009">
    <property type="entry name" value="AAA"/>
    <property type="match status" value="1"/>
</dbReference>
<dbReference type="CDD" id="cd06571">
    <property type="entry name" value="Bac_DnaA_C"/>
    <property type="match status" value="1"/>
</dbReference>
<dbReference type="FunFam" id="3.40.50.300:FF:000668">
    <property type="entry name" value="Chromosomal replication initiator protein DnaA"/>
    <property type="match status" value="1"/>
</dbReference>
<dbReference type="Gene3D" id="1.10.1750.10">
    <property type="match status" value="1"/>
</dbReference>
<dbReference type="Gene3D" id="1.10.8.60">
    <property type="match status" value="1"/>
</dbReference>
<dbReference type="Gene3D" id="3.30.300.180">
    <property type="match status" value="1"/>
</dbReference>
<dbReference type="Gene3D" id="3.40.50.300">
    <property type="entry name" value="P-loop containing nucleotide triphosphate hydrolases"/>
    <property type="match status" value="1"/>
</dbReference>
<dbReference type="HAMAP" id="MF_00377">
    <property type="entry name" value="DnaA_bact"/>
    <property type="match status" value="1"/>
</dbReference>
<dbReference type="InterPro" id="IPR003593">
    <property type="entry name" value="AAA+_ATPase"/>
</dbReference>
<dbReference type="InterPro" id="IPR001957">
    <property type="entry name" value="Chromosome_initiator_DnaA"/>
</dbReference>
<dbReference type="InterPro" id="IPR020591">
    <property type="entry name" value="Chromosome_initiator_DnaA-like"/>
</dbReference>
<dbReference type="InterPro" id="IPR018312">
    <property type="entry name" value="Chromosome_initiator_DnaA_CS"/>
</dbReference>
<dbReference type="InterPro" id="IPR013159">
    <property type="entry name" value="DnaA_C"/>
</dbReference>
<dbReference type="InterPro" id="IPR013317">
    <property type="entry name" value="DnaA_dom"/>
</dbReference>
<dbReference type="InterPro" id="IPR024633">
    <property type="entry name" value="DnaA_N_dom"/>
</dbReference>
<dbReference type="InterPro" id="IPR038454">
    <property type="entry name" value="DnaA_N_sf"/>
</dbReference>
<dbReference type="InterPro" id="IPR027417">
    <property type="entry name" value="P-loop_NTPase"/>
</dbReference>
<dbReference type="InterPro" id="IPR010921">
    <property type="entry name" value="Trp_repressor/repl_initiator"/>
</dbReference>
<dbReference type="NCBIfam" id="TIGR00362">
    <property type="entry name" value="DnaA"/>
    <property type="match status" value="1"/>
</dbReference>
<dbReference type="PANTHER" id="PTHR30050">
    <property type="entry name" value="CHROMOSOMAL REPLICATION INITIATOR PROTEIN DNAA"/>
    <property type="match status" value="1"/>
</dbReference>
<dbReference type="PANTHER" id="PTHR30050:SF2">
    <property type="entry name" value="CHROMOSOMAL REPLICATION INITIATOR PROTEIN DNAA"/>
    <property type="match status" value="1"/>
</dbReference>
<dbReference type="Pfam" id="PF00308">
    <property type="entry name" value="Bac_DnaA"/>
    <property type="match status" value="1"/>
</dbReference>
<dbReference type="Pfam" id="PF08299">
    <property type="entry name" value="Bac_DnaA_C"/>
    <property type="match status" value="1"/>
</dbReference>
<dbReference type="Pfam" id="PF11638">
    <property type="entry name" value="DnaA_N"/>
    <property type="match status" value="1"/>
</dbReference>
<dbReference type="PRINTS" id="PR00051">
    <property type="entry name" value="DNAA"/>
</dbReference>
<dbReference type="SMART" id="SM00382">
    <property type="entry name" value="AAA"/>
    <property type="match status" value="1"/>
</dbReference>
<dbReference type="SMART" id="SM00760">
    <property type="entry name" value="Bac_DnaA_C"/>
    <property type="match status" value="1"/>
</dbReference>
<dbReference type="SUPFAM" id="SSF52540">
    <property type="entry name" value="P-loop containing nucleoside triphosphate hydrolases"/>
    <property type="match status" value="1"/>
</dbReference>
<dbReference type="SUPFAM" id="SSF48295">
    <property type="entry name" value="TrpR-like"/>
    <property type="match status" value="1"/>
</dbReference>
<dbReference type="PROSITE" id="PS01008">
    <property type="entry name" value="DNAA"/>
    <property type="match status" value="1"/>
</dbReference>
<accession>Q5NIQ8</accession>
<gene>
    <name evidence="1" type="primary">dnaA</name>
    <name type="ordered locus">FTT_0001</name>
</gene>
<sequence>MTTWDKCLKKIKKNLSTFEYKTWIKPIHVEQNSNLFTVYCNNEYFKKHIKSKYGNLILSTIQECHGNDLIIEYSNKKFSGEKITEVITAGPQANFFSTTSVEIKDESEDTKVVQEPKISKKSNSKDFSSSQELFGFDEAMLITAKEDEEYSFGLPLKEKYVFDSFVVGDANKIARAAAMQVSINPGKLHNPLFIYGGSGLGKTHLMQAIGNHAREVNPNAKIIYTNSEQFIKDYVNSIRLQDQDEFQRVYRSADILLIDDIQFIAGKEGTAQEFFHTFNALYENGKQIILTSDKYPNEIEGLEERLVSRFGYGLTVSVDMPDLETRIAILLKKAHDLGQKLPNETAAFIAENVRTNVRELEGALNRVLTTSKFNHKDPTIEVAQACLRDVIKIQEKKVKIDNIQKVVADFYRIRVKDLTSNQRSRNIARPRQIAMSLARELTSHSLPEIGNAFGGRDHTTVMHAVKAITKLRQSNTSISDDYELLLDKISR</sequence>
<reference key="1">
    <citation type="journal article" date="2005" name="Nat. Genet.">
        <title>The complete genome sequence of Francisella tularensis, the causative agent of tularemia.</title>
        <authorList>
            <person name="Larsson P."/>
            <person name="Oyston P.C.F."/>
            <person name="Chain P."/>
            <person name="Chu M.C."/>
            <person name="Duffield M."/>
            <person name="Fuxelius H.-H."/>
            <person name="Garcia E."/>
            <person name="Haelltorp G."/>
            <person name="Johansson D."/>
            <person name="Isherwood K.E."/>
            <person name="Karp P.D."/>
            <person name="Larsson E."/>
            <person name="Liu Y."/>
            <person name="Michell S."/>
            <person name="Prior J."/>
            <person name="Prior R."/>
            <person name="Malfatti S."/>
            <person name="Sjoestedt A."/>
            <person name="Svensson K."/>
            <person name="Thompson N."/>
            <person name="Vergez L."/>
            <person name="Wagg J.K."/>
            <person name="Wren B.W."/>
            <person name="Lindler L.E."/>
            <person name="Andersson S.G.E."/>
            <person name="Forsman M."/>
            <person name="Titball R.W."/>
        </authorList>
    </citation>
    <scope>NUCLEOTIDE SEQUENCE [LARGE SCALE GENOMIC DNA]</scope>
    <source>
        <strain>SCHU S4 / Schu 4</strain>
    </source>
</reference>
<keyword id="KW-0067">ATP-binding</keyword>
<keyword id="KW-0963">Cytoplasm</keyword>
<keyword id="KW-0235">DNA replication</keyword>
<keyword id="KW-0238">DNA-binding</keyword>
<keyword id="KW-0446">Lipid-binding</keyword>
<keyword id="KW-0547">Nucleotide-binding</keyword>
<keyword id="KW-1185">Reference proteome</keyword>
<name>DNAA_FRATT</name>